<feature type="chain" id="PRO_0000290977" description="Small ribosomal subunit protein uS8c">
    <location>
        <begin position="1"/>
        <end position="134"/>
    </location>
</feature>
<sequence length="134" mass="15452">MGKDTIADIITSIRNADMNRKGTVRIGSTNITESIVKILLREGFIENVRKHRESNQYFLILTLRHRRNKKESYKTILNLKRISRPGLRIYSNSQRIPRILGGIGIVILSTSQGIMTDREARLKRIGGEILCYIW</sequence>
<proteinExistence type="inferred from homology"/>
<keyword id="KW-0150">Chloroplast</keyword>
<keyword id="KW-0934">Plastid</keyword>
<keyword id="KW-0687">Ribonucleoprotein</keyword>
<keyword id="KW-0689">Ribosomal protein</keyword>
<keyword id="KW-0694">RNA-binding</keyword>
<keyword id="KW-0699">rRNA-binding</keyword>
<gene>
    <name type="primary">rps8</name>
</gene>
<organism>
    <name type="scientific">Capsella bursa-pastoris</name>
    <name type="common">Shepherd's purse</name>
    <name type="synonym">Thlaspi bursa-pastoris</name>
    <dbReference type="NCBI Taxonomy" id="3719"/>
    <lineage>
        <taxon>Eukaryota</taxon>
        <taxon>Viridiplantae</taxon>
        <taxon>Streptophyta</taxon>
        <taxon>Embryophyta</taxon>
        <taxon>Tracheophyta</taxon>
        <taxon>Spermatophyta</taxon>
        <taxon>Magnoliopsida</taxon>
        <taxon>eudicotyledons</taxon>
        <taxon>Gunneridae</taxon>
        <taxon>Pentapetalae</taxon>
        <taxon>rosids</taxon>
        <taxon>malvids</taxon>
        <taxon>Brassicales</taxon>
        <taxon>Brassicaceae</taxon>
        <taxon>Camelineae</taxon>
        <taxon>Capsella</taxon>
    </lineage>
</organism>
<protein>
    <recommendedName>
        <fullName evidence="2">Small ribosomal subunit protein uS8c</fullName>
    </recommendedName>
    <alternativeName>
        <fullName>30S ribosomal protein S8, chloroplastic</fullName>
    </alternativeName>
</protein>
<accession>A4QKM7</accession>
<evidence type="ECO:0000250" key="1"/>
<evidence type="ECO:0000305" key="2"/>
<comment type="function">
    <text evidence="1">One of the primary rRNA binding proteins, it binds directly to 16S rRNA central domain where it helps coordinate assembly of the platform of the 30S subunit.</text>
</comment>
<comment type="subunit">
    <text evidence="1">Part of the 30S ribosomal subunit.</text>
</comment>
<comment type="subcellular location">
    <subcellularLocation>
        <location>Plastid</location>
        <location>Chloroplast</location>
    </subcellularLocation>
</comment>
<comment type="similarity">
    <text evidence="2">Belongs to the universal ribosomal protein uS8 family.</text>
</comment>
<name>RR8_CAPBU</name>
<dbReference type="EMBL" id="AP009371">
    <property type="protein sequence ID" value="BAF50232.1"/>
    <property type="molecule type" value="Genomic_DNA"/>
</dbReference>
<dbReference type="RefSeq" id="YP_001123408.1">
    <property type="nucleotide sequence ID" value="NC_009270.1"/>
</dbReference>
<dbReference type="SMR" id="A4QKM7"/>
<dbReference type="GeneID" id="4961738"/>
<dbReference type="GO" id="GO:0009507">
    <property type="term" value="C:chloroplast"/>
    <property type="evidence" value="ECO:0007669"/>
    <property type="project" value="UniProtKB-SubCell"/>
</dbReference>
<dbReference type="GO" id="GO:1990904">
    <property type="term" value="C:ribonucleoprotein complex"/>
    <property type="evidence" value="ECO:0007669"/>
    <property type="project" value="UniProtKB-KW"/>
</dbReference>
<dbReference type="GO" id="GO:0005840">
    <property type="term" value="C:ribosome"/>
    <property type="evidence" value="ECO:0007669"/>
    <property type="project" value="UniProtKB-KW"/>
</dbReference>
<dbReference type="GO" id="GO:0019843">
    <property type="term" value="F:rRNA binding"/>
    <property type="evidence" value="ECO:0007669"/>
    <property type="project" value="UniProtKB-UniRule"/>
</dbReference>
<dbReference type="GO" id="GO:0003735">
    <property type="term" value="F:structural constituent of ribosome"/>
    <property type="evidence" value="ECO:0007669"/>
    <property type="project" value="InterPro"/>
</dbReference>
<dbReference type="GO" id="GO:0006412">
    <property type="term" value="P:translation"/>
    <property type="evidence" value="ECO:0007669"/>
    <property type="project" value="UniProtKB-UniRule"/>
</dbReference>
<dbReference type="FunFam" id="3.30.1490.10:FF:000001">
    <property type="entry name" value="30S ribosomal protein S8"/>
    <property type="match status" value="1"/>
</dbReference>
<dbReference type="FunFam" id="3.30.1370.30:FF:000004">
    <property type="entry name" value="30S ribosomal protein S8, chloroplastic"/>
    <property type="match status" value="1"/>
</dbReference>
<dbReference type="Gene3D" id="3.30.1370.30">
    <property type="match status" value="1"/>
</dbReference>
<dbReference type="Gene3D" id="3.30.1490.10">
    <property type="match status" value="1"/>
</dbReference>
<dbReference type="HAMAP" id="MF_01302_B">
    <property type="entry name" value="Ribosomal_uS8_B"/>
    <property type="match status" value="1"/>
</dbReference>
<dbReference type="InterPro" id="IPR000630">
    <property type="entry name" value="Ribosomal_uS8"/>
</dbReference>
<dbReference type="InterPro" id="IPR047863">
    <property type="entry name" value="Ribosomal_uS8_CS"/>
</dbReference>
<dbReference type="InterPro" id="IPR035987">
    <property type="entry name" value="Ribosomal_uS8_sf"/>
</dbReference>
<dbReference type="NCBIfam" id="NF001109">
    <property type="entry name" value="PRK00136.1"/>
    <property type="match status" value="1"/>
</dbReference>
<dbReference type="PANTHER" id="PTHR11758">
    <property type="entry name" value="40S RIBOSOMAL PROTEIN S15A"/>
    <property type="match status" value="1"/>
</dbReference>
<dbReference type="Pfam" id="PF00410">
    <property type="entry name" value="Ribosomal_S8"/>
    <property type="match status" value="1"/>
</dbReference>
<dbReference type="SUPFAM" id="SSF56047">
    <property type="entry name" value="Ribosomal protein S8"/>
    <property type="match status" value="1"/>
</dbReference>
<dbReference type="PROSITE" id="PS00053">
    <property type="entry name" value="RIBOSOMAL_S8"/>
    <property type="match status" value="1"/>
</dbReference>
<reference key="1">
    <citation type="submission" date="2007-03" db="EMBL/GenBank/DDBJ databases">
        <title>Sequencing analysis of Capsella bursa-pastoris JO22 chloroplast DNA.</title>
        <authorList>
            <person name="Hosouchi T."/>
            <person name="Tsuruoka H."/>
            <person name="Kotani H."/>
        </authorList>
    </citation>
    <scope>NUCLEOTIDE SEQUENCE [LARGE SCALE GENOMIC DNA]</scope>
</reference>
<geneLocation type="chloroplast"/>